<name>OBP_VZVO</name>
<accession>Q9J3N7</accession>
<comment type="function">
    <text evidence="1">Functions as a docking protein to recruit essential components of the viral replication machinery to viral DNA origins. In the presence of the major DNA-binding protein, opens dsDNA leading to a conformational change in the origin that facilitates DNA unwinding and subsequent replication (By similarity).</text>
</comment>
<comment type="subunit">
    <text evidence="1">Homodimer. Interacts with the major DNA-binding protein. Interacts with the helicase/primase component 52 and the polymerase accessory protein (By similarity).</text>
</comment>
<comment type="subcellular location">
    <subcellularLocation>
        <location evidence="3">Host nucleus</location>
    </subcellularLocation>
</comment>
<comment type="similarity">
    <text evidence="3">Belongs to the herpesviridae OriBP family.</text>
</comment>
<gene>
    <name type="ORF">ORF51</name>
</gene>
<organism>
    <name type="scientific">Varicella-zoster virus (strain Oka vaccine)</name>
    <name type="common">HHV-3</name>
    <name type="synonym">Human herpesvirus 3</name>
    <dbReference type="NCBI Taxonomy" id="341980"/>
    <lineage>
        <taxon>Viruses</taxon>
        <taxon>Duplodnaviria</taxon>
        <taxon>Heunggongvirae</taxon>
        <taxon>Peploviricota</taxon>
        <taxon>Herviviricetes</taxon>
        <taxon>Herpesvirales</taxon>
        <taxon>Orthoherpesviridae</taxon>
        <taxon>Alphaherpesvirinae</taxon>
        <taxon>Varicellovirus</taxon>
        <taxon>Varicellovirus humanalpha3</taxon>
        <taxon>Human herpesvirus 3</taxon>
    </lineage>
</organism>
<proteinExistence type="inferred from homology"/>
<keyword id="KW-0067">ATP-binding</keyword>
<keyword id="KW-0235">DNA replication</keyword>
<keyword id="KW-0238">DNA-binding</keyword>
<keyword id="KW-1048">Host nucleus</keyword>
<keyword id="KW-0547">Nucleotide-binding</keyword>
<evidence type="ECO:0000250" key="1"/>
<evidence type="ECO:0000255" key="2">
    <source>
        <dbReference type="PROSITE-ProRule" id="PRU00541"/>
    </source>
</evidence>
<evidence type="ECO:0000305" key="3"/>
<feature type="chain" id="PRO_0000385141" description="Replication origin-binding protein">
    <location>
        <begin position="1"/>
        <end position="835"/>
    </location>
</feature>
<feature type="domain" description="Helicase ATP-binding" evidence="2">
    <location>
        <begin position="54"/>
        <end position="215"/>
    </location>
</feature>
<feature type="binding site" evidence="2">
    <location>
        <begin position="67"/>
        <end position="74"/>
    </location>
    <ligand>
        <name>ATP</name>
        <dbReference type="ChEBI" id="CHEBI:30616"/>
    </ligand>
</feature>
<reference key="1">
    <citation type="journal article" date="2000" name="J. Infect. Dis.">
        <title>Nucleotide sequences that distinguish Oka vaccine from parental Oka and other varicella-zoster virus isolates.</title>
        <authorList>
            <person name="Argaw T."/>
            <person name="Cohen J.I."/>
            <person name="Klutch M."/>
            <person name="Lekstrom K."/>
            <person name="Yoshikawa T."/>
            <person name="Asano Y."/>
            <person name="Krause P.R."/>
        </authorList>
    </citation>
    <scope>NUCLEOTIDE SEQUENCE [GENOMIC DNA]</scope>
    <source>
        <strain>V-Oka(Biken)</strain>
    </source>
</reference>
<reference key="2">
    <citation type="journal article" date="2002" name="J. Virol.">
        <title>Comparison of the complete DNA sequences of the Oka varicella vaccine and its parental virus.</title>
        <authorList>
            <person name="Gomi Y."/>
            <person name="Sunamachi H."/>
            <person name="Mori Y."/>
            <person name="Nagaike K."/>
            <person name="Takahashi M."/>
            <person name="Yamanishi K."/>
        </authorList>
    </citation>
    <scope>NUCLEOTIDE SEQUENCE [LARGE SCALE GENOMIC DNA]</scope>
    <source>
        <strain>Isolate Human/Japan/P-Oka/1970</strain>
        <strain>Oka varicella vaccine Biken (V-Oka-Biken)</strain>
    </source>
</reference>
<reference key="3">
    <citation type="journal article" date="2008" name="J. Virol.">
        <title>Complete DNA sequences of two oka strain varicella-zoster virus genomes.</title>
        <authorList>
            <person name="Tillieux S.L."/>
            <person name="Halsey W.S."/>
            <person name="Thomas E.S."/>
            <person name="Voycik J.J."/>
            <person name="Sathe G.M."/>
            <person name="Vassilev V."/>
        </authorList>
    </citation>
    <scope>NUCLEOTIDE SEQUENCE [LARGE SCALE GENOMIC DNA]</scope>
    <source>
        <strain>Oka varicella vaccine VarilRix (V-Oka-GSK)</strain>
        <strain>Oka varicella vaccine Varivax (V-Oka-Merck)</strain>
    </source>
</reference>
<dbReference type="EMBL" id="AF206304">
    <property type="protein sequence ID" value="AAF61652.1"/>
    <property type="molecule type" value="Genomic_DNA"/>
</dbReference>
<dbReference type="EMBL" id="AB097932">
    <property type="status" value="NOT_ANNOTATED_CDS"/>
    <property type="molecule type" value="Genomic_DNA"/>
</dbReference>
<dbReference type="EMBL" id="AB097933">
    <property type="status" value="NOT_ANNOTATED_CDS"/>
    <property type="molecule type" value="Genomic_DNA"/>
</dbReference>
<dbReference type="EMBL" id="DQ008354">
    <property type="protein sequence ID" value="AAY57660.1"/>
    <property type="molecule type" value="Genomic_DNA"/>
</dbReference>
<dbReference type="EMBL" id="DQ008355">
    <property type="protein sequence ID" value="AAY57731.1"/>
    <property type="molecule type" value="Genomic_DNA"/>
</dbReference>
<dbReference type="IntAct" id="Q9J3N7">
    <property type="interactions" value="2"/>
</dbReference>
<dbReference type="MINT" id="Q9J3N7"/>
<dbReference type="Proteomes" id="UP000002603">
    <property type="component" value="Genome"/>
</dbReference>
<dbReference type="Proteomes" id="UP000008504">
    <property type="component" value="Genome"/>
</dbReference>
<dbReference type="Proteomes" id="UP000008505">
    <property type="component" value="Genome"/>
</dbReference>
<dbReference type="Proteomes" id="UP000008506">
    <property type="component" value="Genome"/>
</dbReference>
<dbReference type="GO" id="GO:0042025">
    <property type="term" value="C:host cell nucleus"/>
    <property type="evidence" value="ECO:0007669"/>
    <property type="project" value="UniProtKB-SubCell"/>
</dbReference>
<dbReference type="GO" id="GO:0005524">
    <property type="term" value="F:ATP binding"/>
    <property type="evidence" value="ECO:0007669"/>
    <property type="project" value="UniProtKB-KW"/>
</dbReference>
<dbReference type="GO" id="GO:0016887">
    <property type="term" value="F:ATP hydrolysis activity"/>
    <property type="evidence" value="ECO:0007669"/>
    <property type="project" value="InterPro"/>
</dbReference>
<dbReference type="GO" id="GO:0003688">
    <property type="term" value="F:DNA replication origin binding"/>
    <property type="evidence" value="ECO:0007669"/>
    <property type="project" value="InterPro"/>
</dbReference>
<dbReference type="GO" id="GO:0006260">
    <property type="term" value="P:DNA replication"/>
    <property type="evidence" value="ECO:0007669"/>
    <property type="project" value="UniProtKB-KW"/>
</dbReference>
<dbReference type="Gene3D" id="3.40.50.300">
    <property type="entry name" value="P-loop containing nucleotide triphosphate hydrolases"/>
    <property type="match status" value="1"/>
</dbReference>
<dbReference type="InterPro" id="IPR003593">
    <property type="entry name" value="AAA+_ATPase"/>
</dbReference>
<dbReference type="InterPro" id="IPR014001">
    <property type="entry name" value="Helicase_ATP-bd"/>
</dbReference>
<dbReference type="InterPro" id="IPR027417">
    <property type="entry name" value="P-loop_NTPase"/>
</dbReference>
<dbReference type="InterPro" id="IPR003450">
    <property type="entry name" value="Replication_origin-bd"/>
</dbReference>
<dbReference type="Pfam" id="PF02399">
    <property type="entry name" value="Herpes_ori_bp"/>
    <property type="match status" value="1"/>
</dbReference>
<dbReference type="SMART" id="SM00382">
    <property type="entry name" value="AAA"/>
    <property type="match status" value="1"/>
</dbReference>
<dbReference type="SMART" id="SM00487">
    <property type="entry name" value="DEXDc"/>
    <property type="match status" value="1"/>
</dbReference>
<dbReference type="SUPFAM" id="SSF52540">
    <property type="entry name" value="P-loop containing nucleoside triphosphate hydrolases"/>
    <property type="match status" value="1"/>
</dbReference>
<dbReference type="PROSITE" id="PS51192">
    <property type="entry name" value="HELICASE_ATP_BIND_1"/>
    <property type="match status" value="1"/>
</dbReference>
<organismHost>
    <name type="scientific">Homo sapiens</name>
    <name type="common">Human</name>
    <dbReference type="NCBI Taxonomy" id="9606"/>
</organismHost>
<sequence>MSPNTGESNAAVYASSTQLARALYGGDLVSWIKHTHPGISLELQLDVPVKLIKPGMSQTRPVTVVRAPMGSGKTTALLEWLQHALKADISVLVVSCRRSFTQTLIQRFNDAGLSGFVTYLTSETYIMGFKRLIVQLESLHRVSSEAIDSYDVLILDEVMSVIGQLYSPTMRRLSAVDSLLYRLLNRCSQIIAMDATVNSQFIDLISGLRGDENIHTIVCTYAGVGFSGRTCTILRDMGIDTLVRVIKRSPEHEDVRTIHQLRGTFFDELALRLQCGHNICIFSSTLSFSELVAQFCAIFTDSILILNSTRPLCNVNEWKHFRVLVYTTVVTVGLSFDMAHFHSMFAYIKPMSYGPDMVSVYQSLGRVRLLLLNEVLMYVDGSRTRCGPLFSPMLLNFTIANKFQWFPTHTQITNKLCCAFRQRCANAFTRSNTHLFSRFKYKHLFERCSLWSLADSINILQTLLASNQILVVLDGMGPITDVSPVQFCAFIHDLRHSANAVASCMRSLRQDNDSCLTDFGPSGFMADNITAFMEKYLMESINTEEQIKVFKALACPIEQPRLVNTAILGACIRIPEALEAFDVFQKIYTHYASGWFPVLDKTGEFSIATITTAPNLTTHWELFRRCAYIAKTLKWNPSTEGCVTQVLDTDINTLFNQHGDSLAQLIFEVMRCNVTDAKIILNRPVWRTTGFLDGCHNQCFRPIPTKHEYNIALFRLIWEQLFGARVTKSTQTFPGSTRVKNLKKKDLETLLDSINVDRSACRTYRQLYNLLMSHRHSFSQQRYKITAPAWARHVYFQAHQMHLAPHAEAMLQLALSELSPGSWPRINGAVNFESL</sequence>
<protein>
    <recommendedName>
        <fullName>Replication origin-binding protein</fullName>
        <shortName>OBP</shortName>
    </recommendedName>
    <alternativeName>
        <fullName>OriBP</fullName>
    </alternativeName>
</protein>